<name>SYD_ECO5E</name>
<proteinExistence type="inferred from homology"/>
<organism>
    <name type="scientific">Escherichia coli O157:H7 (strain EC4115 / EHEC)</name>
    <dbReference type="NCBI Taxonomy" id="444450"/>
    <lineage>
        <taxon>Bacteria</taxon>
        <taxon>Pseudomonadati</taxon>
        <taxon>Pseudomonadota</taxon>
        <taxon>Gammaproteobacteria</taxon>
        <taxon>Enterobacterales</taxon>
        <taxon>Enterobacteriaceae</taxon>
        <taxon>Escherichia</taxon>
    </lineage>
</organism>
<comment type="function">
    <text evidence="1">Catalyzes the attachment of L-aspartate to tRNA(Asp) in a two-step reaction: L-aspartate is first activated by ATP to form Asp-AMP and then transferred to the acceptor end of tRNA(Asp).</text>
</comment>
<comment type="catalytic activity">
    <reaction evidence="1">
        <text>tRNA(Asp) + L-aspartate + ATP = L-aspartyl-tRNA(Asp) + AMP + diphosphate</text>
        <dbReference type="Rhea" id="RHEA:19649"/>
        <dbReference type="Rhea" id="RHEA-COMP:9660"/>
        <dbReference type="Rhea" id="RHEA-COMP:9678"/>
        <dbReference type="ChEBI" id="CHEBI:29991"/>
        <dbReference type="ChEBI" id="CHEBI:30616"/>
        <dbReference type="ChEBI" id="CHEBI:33019"/>
        <dbReference type="ChEBI" id="CHEBI:78442"/>
        <dbReference type="ChEBI" id="CHEBI:78516"/>
        <dbReference type="ChEBI" id="CHEBI:456215"/>
        <dbReference type="EC" id="6.1.1.12"/>
    </reaction>
</comment>
<comment type="subunit">
    <text evidence="1">Homodimer.</text>
</comment>
<comment type="subcellular location">
    <subcellularLocation>
        <location evidence="1">Cytoplasm</location>
    </subcellularLocation>
</comment>
<comment type="similarity">
    <text evidence="1">Belongs to the class-II aminoacyl-tRNA synthetase family. Type 1 subfamily.</text>
</comment>
<evidence type="ECO:0000255" key="1">
    <source>
        <dbReference type="HAMAP-Rule" id="MF_00044"/>
    </source>
</evidence>
<accession>B5YR11</accession>
<reference key="1">
    <citation type="journal article" date="2011" name="Proc. Natl. Acad. Sci. U.S.A.">
        <title>Genomic anatomy of Escherichia coli O157:H7 outbreaks.</title>
        <authorList>
            <person name="Eppinger M."/>
            <person name="Mammel M.K."/>
            <person name="Leclerc J.E."/>
            <person name="Ravel J."/>
            <person name="Cebula T.A."/>
        </authorList>
    </citation>
    <scope>NUCLEOTIDE SEQUENCE [LARGE SCALE GENOMIC DNA]</scope>
    <source>
        <strain>EC4115 / EHEC</strain>
    </source>
</reference>
<sequence>MRTEYCGQLRLSHVGQQVTLCGWVNRRRDLGSLIFIDMRDREGIVQVFFDPDRADALKLASELRNEFCIQVTGTVRARDEKNINRDMATGEIEVLASSLTIINRADVLPLDSNHVNTEEARLKYRYLDLRRPEMAQRLKTRAKITSLVRRFMDDHGFLDIETPMLTKATPEGARDYLVPSRVHKGKFYALPQSPQLFKQLLMMSGFDRYYQIVKCFRDEDLRADRQPEFTQIDVETSFMTAPQVREVMEALVRHLWLEVKGVDLGDFPVMTFAEAERRYGSDKPDLRNPMELTDVADLLRSVEFAVFAGPANDPKGRVAALRVPGGASLTRKQIDEYGNFVKIYGAKGLAYIKVNERAKGLEGINSPVAKFLNAEIIEAILDRTAAQDGDMIFFGADNKKIVADAMGALRLKVGKDLGLTDESKWAPLWVIDFPMFEDDGEGGLTAMHHPFTSPKDMTAAELKAAPENAVANAYDMVINGYEVGGGSVRIHNGDMQQTVFGILGINEEEQREKFGFLLDALKYGTPPHAGLAFGLDRLTMLLTGTDNIRDVIAFPKTTAAACLMTEAPSFANPAALAELSIQVVKKAENN</sequence>
<feature type="chain" id="PRO_1000090990" description="Aspartate--tRNA ligase">
    <location>
        <begin position="1"/>
        <end position="590"/>
    </location>
</feature>
<feature type="region of interest" description="Aspartate" evidence="1">
    <location>
        <begin position="195"/>
        <end position="198"/>
    </location>
</feature>
<feature type="binding site" evidence="1">
    <location>
        <position position="171"/>
    </location>
    <ligand>
        <name>L-aspartate</name>
        <dbReference type="ChEBI" id="CHEBI:29991"/>
    </ligand>
</feature>
<feature type="binding site" evidence="1">
    <location>
        <begin position="217"/>
        <end position="219"/>
    </location>
    <ligand>
        <name>ATP</name>
        <dbReference type="ChEBI" id="CHEBI:30616"/>
    </ligand>
</feature>
<feature type="binding site" evidence="1">
    <location>
        <position position="217"/>
    </location>
    <ligand>
        <name>L-aspartate</name>
        <dbReference type="ChEBI" id="CHEBI:29991"/>
    </ligand>
</feature>
<feature type="binding site" evidence="1">
    <location>
        <position position="226"/>
    </location>
    <ligand>
        <name>ATP</name>
        <dbReference type="ChEBI" id="CHEBI:30616"/>
    </ligand>
</feature>
<feature type="binding site" evidence="1">
    <location>
        <position position="448"/>
    </location>
    <ligand>
        <name>L-aspartate</name>
        <dbReference type="ChEBI" id="CHEBI:29991"/>
    </ligand>
</feature>
<feature type="binding site" evidence="1">
    <location>
        <position position="482"/>
    </location>
    <ligand>
        <name>ATP</name>
        <dbReference type="ChEBI" id="CHEBI:30616"/>
    </ligand>
</feature>
<feature type="binding site" evidence="1">
    <location>
        <position position="489"/>
    </location>
    <ligand>
        <name>L-aspartate</name>
        <dbReference type="ChEBI" id="CHEBI:29991"/>
    </ligand>
</feature>
<feature type="binding site" evidence="1">
    <location>
        <begin position="534"/>
        <end position="537"/>
    </location>
    <ligand>
        <name>ATP</name>
        <dbReference type="ChEBI" id="CHEBI:30616"/>
    </ligand>
</feature>
<keyword id="KW-0030">Aminoacyl-tRNA synthetase</keyword>
<keyword id="KW-0067">ATP-binding</keyword>
<keyword id="KW-0963">Cytoplasm</keyword>
<keyword id="KW-0436">Ligase</keyword>
<keyword id="KW-0547">Nucleotide-binding</keyword>
<keyword id="KW-0648">Protein biosynthesis</keyword>
<gene>
    <name evidence="1" type="primary">aspS</name>
    <name type="ordered locus">ECH74115_2602</name>
</gene>
<dbReference type="EC" id="6.1.1.12" evidence="1"/>
<dbReference type="EMBL" id="CP001164">
    <property type="protein sequence ID" value="ACI35807.1"/>
    <property type="molecule type" value="Genomic_DNA"/>
</dbReference>
<dbReference type="RefSeq" id="WP_001258685.1">
    <property type="nucleotide sequence ID" value="NC_011353.1"/>
</dbReference>
<dbReference type="SMR" id="B5YR11"/>
<dbReference type="KEGG" id="ecf:ECH74115_2602"/>
<dbReference type="HOGENOM" id="CLU_014330_3_2_6"/>
<dbReference type="GO" id="GO:0005737">
    <property type="term" value="C:cytoplasm"/>
    <property type="evidence" value="ECO:0007669"/>
    <property type="project" value="UniProtKB-SubCell"/>
</dbReference>
<dbReference type="GO" id="GO:0004815">
    <property type="term" value="F:aspartate-tRNA ligase activity"/>
    <property type="evidence" value="ECO:0007669"/>
    <property type="project" value="UniProtKB-UniRule"/>
</dbReference>
<dbReference type="GO" id="GO:0005524">
    <property type="term" value="F:ATP binding"/>
    <property type="evidence" value="ECO:0007669"/>
    <property type="project" value="UniProtKB-UniRule"/>
</dbReference>
<dbReference type="GO" id="GO:0003676">
    <property type="term" value="F:nucleic acid binding"/>
    <property type="evidence" value="ECO:0007669"/>
    <property type="project" value="InterPro"/>
</dbReference>
<dbReference type="GO" id="GO:0006422">
    <property type="term" value="P:aspartyl-tRNA aminoacylation"/>
    <property type="evidence" value="ECO:0007669"/>
    <property type="project" value="UniProtKB-UniRule"/>
</dbReference>
<dbReference type="CDD" id="cd00777">
    <property type="entry name" value="AspRS_core"/>
    <property type="match status" value="1"/>
</dbReference>
<dbReference type="CDD" id="cd04317">
    <property type="entry name" value="EcAspRS_like_N"/>
    <property type="match status" value="1"/>
</dbReference>
<dbReference type="FunFam" id="2.40.50.140:FF:000080">
    <property type="entry name" value="Aspartate--tRNA ligase"/>
    <property type="match status" value="1"/>
</dbReference>
<dbReference type="FunFam" id="3.30.1360.30:FF:000001">
    <property type="entry name" value="Aspartate--tRNA ligase"/>
    <property type="match status" value="1"/>
</dbReference>
<dbReference type="Gene3D" id="3.30.930.10">
    <property type="entry name" value="Bira Bifunctional Protein, Domain 2"/>
    <property type="match status" value="1"/>
</dbReference>
<dbReference type="Gene3D" id="3.30.1360.30">
    <property type="entry name" value="GAD-like domain"/>
    <property type="match status" value="1"/>
</dbReference>
<dbReference type="Gene3D" id="2.40.50.140">
    <property type="entry name" value="Nucleic acid-binding proteins"/>
    <property type="match status" value="1"/>
</dbReference>
<dbReference type="HAMAP" id="MF_00044">
    <property type="entry name" value="Asp_tRNA_synth_type1"/>
    <property type="match status" value="1"/>
</dbReference>
<dbReference type="InterPro" id="IPR004364">
    <property type="entry name" value="Aa-tRNA-synt_II"/>
</dbReference>
<dbReference type="InterPro" id="IPR006195">
    <property type="entry name" value="aa-tRNA-synth_II"/>
</dbReference>
<dbReference type="InterPro" id="IPR045864">
    <property type="entry name" value="aa-tRNA-synth_II/BPL/LPL"/>
</dbReference>
<dbReference type="InterPro" id="IPR004524">
    <property type="entry name" value="Asp-tRNA-ligase_1"/>
</dbReference>
<dbReference type="InterPro" id="IPR047089">
    <property type="entry name" value="Asp-tRNA-ligase_1_N"/>
</dbReference>
<dbReference type="InterPro" id="IPR002312">
    <property type="entry name" value="Asp/Asn-tRNA-synth_IIb"/>
</dbReference>
<dbReference type="InterPro" id="IPR047090">
    <property type="entry name" value="AspRS_core"/>
</dbReference>
<dbReference type="InterPro" id="IPR004115">
    <property type="entry name" value="GAD-like_sf"/>
</dbReference>
<dbReference type="InterPro" id="IPR029351">
    <property type="entry name" value="GAD_dom"/>
</dbReference>
<dbReference type="InterPro" id="IPR012340">
    <property type="entry name" value="NA-bd_OB-fold"/>
</dbReference>
<dbReference type="InterPro" id="IPR004365">
    <property type="entry name" value="NA-bd_OB_tRNA"/>
</dbReference>
<dbReference type="NCBIfam" id="TIGR00459">
    <property type="entry name" value="aspS_bact"/>
    <property type="match status" value="1"/>
</dbReference>
<dbReference type="NCBIfam" id="NF001750">
    <property type="entry name" value="PRK00476.1"/>
    <property type="match status" value="1"/>
</dbReference>
<dbReference type="PANTHER" id="PTHR22594:SF5">
    <property type="entry name" value="ASPARTATE--TRNA LIGASE, MITOCHONDRIAL"/>
    <property type="match status" value="1"/>
</dbReference>
<dbReference type="PANTHER" id="PTHR22594">
    <property type="entry name" value="ASPARTYL/LYSYL-TRNA SYNTHETASE"/>
    <property type="match status" value="1"/>
</dbReference>
<dbReference type="Pfam" id="PF02938">
    <property type="entry name" value="GAD"/>
    <property type="match status" value="1"/>
</dbReference>
<dbReference type="Pfam" id="PF00152">
    <property type="entry name" value="tRNA-synt_2"/>
    <property type="match status" value="1"/>
</dbReference>
<dbReference type="Pfam" id="PF01336">
    <property type="entry name" value="tRNA_anti-codon"/>
    <property type="match status" value="1"/>
</dbReference>
<dbReference type="PRINTS" id="PR01042">
    <property type="entry name" value="TRNASYNTHASP"/>
</dbReference>
<dbReference type="SUPFAM" id="SSF55681">
    <property type="entry name" value="Class II aaRS and biotin synthetases"/>
    <property type="match status" value="1"/>
</dbReference>
<dbReference type="SUPFAM" id="SSF55261">
    <property type="entry name" value="GAD domain-like"/>
    <property type="match status" value="1"/>
</dbReference>
<dbReference type="SUPFAM" id="SSF50249">
    <property type="entry name" value="Nucleic acid-binding proteins"/>
    <property type="match status" value="1"/>
</dbReference>
<dbReference type="PROSITE" id="PS50862">
    <property type="entry name" value="AA_TRNA_LIGASE_II"/>
    <property type="match status" value="1"/>
</dbReference>
<protein>
    <recommendedName>
        <fullName evidence="1">Aspartate--tRNA ligase</fullName>
        <ecNumber evidence="1">6.1.1.12</ecNumber>
    </recommendedName>
    <alternativeName>
        <fullName evidence="1">Aspartyl-tRNA synthetase</fullName>
        <shortName evidence="1">AspRS</shortName>
    </alternativeName>
</protein>